<name>Y133_MYCGA</name>
<gene>
    <name type="ordered locus">MYCGA1330</name>
    <name type="ORF">MGA_0851</name>
</gene>
<protein>
    <recommendedName>
        <fullName evidence="1">Probable transcriptional regulatory protein MYCGA1330</fullName>
    </recommendedName>
</protein>
<comment type="subcellular location">
    <subcellularLocation>
        <location evidence="1">Cytoplasm</location>
    </subcellularLocation>
</comment>
<comment type="similarity">
    <text evidence="1">Belongs to the TACO1 family.</text>
</comment>
<comment type="sequence caution" evidence="2">
    <conflict type="erroneous initiation">
        <sequence resource="EMBL-CDS" id="AAP56483"/>
    </conflict>
    <text>Extended N-terminus.</text>
</comment>
<keyword id="KW-0963">Cytoplasm</keyword>
<keyword id="KW-0238">DNA-binding</keyword>
<keyword id="KW-1185">Reference proteome</keyword>
<keyword id="KW-0804">Transcription</keyword>
<keyword id="KW-0805">Transcription regulation</keyword>
<evidence type="ECO:0000255" key="1">
    <source>
        <dbReference type="HAMAP-Rule" id="MF_00693"/>
    </source>
</evidence>
<evidence type="ECO:0000305" key="2"/>
<accession>Q7NBX7</accession>
<reference key="1">
    <citation type="journal article" date="2003" name="Microbiology">
        <title>The complete genome sequence of the avian pathogen Mycoplasma gallisepticum strain R(low).</title>
        <authorList>
            <person name="Papazisi L."/>
            <person name="Gorton T.S."/>
            <person name="Kutish G."/>
            <person name="Markham P.F."/>
            <person name="Browning G.F."/>
            <person name="Nguyen D.K."/>
            <person name="Swartzell S."/>
            <person name="Madan A."/>
            <person name="Mahairas G."/>
            <person name="Geary S.J."/>
        </authorList>
    </citation>
    <scope>NUCLEOTIDE SEQUENCE [LARGE SCALE GENOMIC DNA]</scope>
    <source>
        <strain>R(low / passage 15 / clone 2)</strain>
    </source>
</reference>
<feature type="chain" id="PRO_0000175844" description="Probable transcriptional regulatory protein MYCGA1330">
    <location>
        <begin position="1"/>
        <end position="234"/>
    </location>
</feature>
<dbReference type="EMBL" id="AE015450">
    <property type="protein sequence ID" value="AAP56483.2"/>
    <property type="status" value="ALT_INIT"/>
    <property type="molecule type" value="Genomic_DNA"/>
</dbReference>
<dbReference type="RefSeq" id="WP_011883850.1">
    <property type="nucleotide sequence ID" value="NC_004829.2"/>
</dbReference>
<dbReference type="SMR" id="Q7NBX7"/>
<dbReference type="KEGG" id="mga:MGA_0851"/>
<dbReference type="PATRIC" id="fig|233150.7.peg.147"/>
<dbReference type="HOGENOM" id="CLU_062974_2_2_14"/>
<dbReference type="Proteomes" id="UP000001418">
    <property type="component" value="Chromosome"/>
</dbReference>
<dbReference type="GO" id="GO:0005829">
    <property type="term" value="C:cytosol"/>
    <property type="evidence" value="ECO:0007669"/>
    <property type="project" value="TreeGrafter"/>
</dbReference>
<dbReference type="GO" id="GO:0003677">
    <property type="term" value="F:DNA binding"/>
    <property type="evidence" value="ECO:0007669"/>
    <property type="project" value="UniProtKB-UniRule"/>
</dbReference>
<dbReference type="GO" id="GO:0006355">
    <property type="term" value="P:regulation of DNA-templated transcription"/>
    <property type="evidence" value="ECO:0007669"/>
    <property type="project" value="UniProtKB-UniRule"/>
</dbReference>
<dbReference type="Gene3D" id="1.10.10.200">
    <property type="match status" value="1"/>
</dbReference>
<dbReference type="Gene3D" id="3.30.70.980">
    <property type="match status" value="2"/>
</dbReference>
<dbReference type="HAMAP" id="MF_00693">
    <property type="entry name" value="Transcrip_reg_TACO1"/>
    <property type="match status" value="1"/>
</dbReference>
<dbReference type="InterPro" id="IPR017856">
    <property type="entry name" value="Integrase-like_N"/>
</dbReference>
<dbReference type="InterPro" id="IPR048300">
    <property type="entry name" value="TACO1_YebC-like_2nd/3rd_dom"/>
</dbReference>
<dbReference type="InterPro" id="IPR049083">
    <property type="entry name" value="TACO1_YebC_N"/>
</dbReference>
<dbReference type="InterPro" id="IPR002876">
    <property type="entry name" value="Transcrip_reg_TACO1-like"/>
</dbReference>
<dbReference type="InterPro" id="IPR026564">
    <property type="entry name" value="Transcrip_reg_TACO1-like_dom3"/>
</dbReference>
<dbReference type="InterPro" id="IPR029072">
    <property type="entry name" value="YebC-like"/>
</dbReference>
<dbReference type="NCBIfam" id="NF009044">
    <property type="entry name" value="PRK12378.1"/>
    <property type="match status" value="1"/>
</dbReference>
<dbReference type="NCBIfam" id="TIGR01033">
    <property type="entry name" value="YebC/PmpR family DNA-binding transcriptional regulator"/>
    <property type="match status" value="1"/>
</dbReference>
<dbReference type="PANTHER" id="PTHR12532:SF6">
    <property type="entry name" value="TRANSCRIPTIONAL REGULATORY PROTEIN YEBC-RELATED"/>
    <property type="match status" value="1"/>
</dbReference>
<dbReference type="PANTHER" id="PTHR12532">
    <property type="entry name" value="TRANSLATIONAL ACTIVATOR OF CYTOCHROME C OXIDASE 1"/>
    <property type="match status" value="1"/>
</dbReference>
<dbReference type="Pfam" id="PF20772">
    <property type="entry name" value="TACO1_YebC_N"/>
    <property type="match status" value="1"/>
</dbReference>
<dbReference type="Pfam" id="PF01709">
    <property type="entry name" value="Transcrip_reg"/>
    <property type="match status" value="1"/>
</dbReference>
<dbReference type="SUPFAM" id="SSF75625">
    <property type="entry name" value="YebC-like"/>
    <property type="match status" value="1"/>
</dbReference>
<proteinExistence type="inferred from homology"/>
<organism>
    <name type="scientific">Mycoplasmoides gallisepticum (strain R(low / passage 15 / clone 2))</name>
    <name type="common">Mycoplasma gallisepticum</name>
    <dbReference type="NCBI Taxonomy" id="710127"/>
    <lineage>
        <taxon>Bacteria</taxon>
        <taxon>Bacillati</taxon>
        <taxon>Mycoplasmatota</taxon>
        <taxon>Mycoplasmoidales</taxon>
        <taxon>Mycoplasmoidaceae</taxon>
        <taxon>Mycoplasmoides</taxon>
    </lineage>
</organism>
<sequence length="234" mass="26556">MPRKHLIANQINKKQQSNAKLWQKLAKEIKAAVKVGGTDPETNYRLKAAIDKALTYNLSKDSINRNIYGNSNKEDDQLIEAEYEIYGPGGLGIIVRTLSDNPNRVISSLNGYISKLKGSLAKPNSVKINFQEQGIILTDLNNYHDEALLELLIDYELIDINSDEEGYEIITVPNAYYEVKKKLEAAGFKIHHSELKLIPLLYVQLTPEQNEMFERFSASCENDDDIQWIVANNQ</sequence>